<accession>P0AD84</accession>
<accession>P09150</accession>
<feature type="chain" id="PRO_0000196523" description="pyr operon leader peptide">
    <location>
        <begin position="1"/>
        <end position="44"/>
    </location>
</feature>
<sequence length="44" mass="5098">MVQCVRHFVLPRLKKDAGLPFFFPLITHSQPLNRGAFFCPGVRR</sequence>
<reference key="1">
    <citation type="journal article" date="2002" name="Proc. Natl. Acad. Sci. U.S.A.">
        <title>Extensive mosaic structure revealed by the complete genome sequence of uropathogenic Escherichia coli.</title>
        <authorList>
            <person name="Welch R.A."/>
            <person name="Burland V."/>
            <person name="Plunkett G. III"/>
            <person name="Redford P."/>
            <person name="Roesch P."/>
            <person name="Rasko D."/>
            <person name="Buckles E.L."/>
            <person name="Liou S.-R."/>
            <person name="Boutin A."/>
            <person name="Hackett J."/>
            <person name="Stroud D."/>
            <person name="Mayhew G.F."/>
            <person name="Rose D.J."/>
            <person name="Zhou S."/>
            <person name="Schwartz D.C."/>
            <person name="Perna N.T."/>
            <person name="Mobley H.L.T."/>
            <person name="Donnenberg M.S."/>
            <person name="Blattner F.R."/>
        </authorList>
    </citation>
    <scope>NUCLEOTIDE SEQUENCE [LARGE SCALE GENOMIC DNA]</scope>
    <source>
        <strain>CFT073 / ATCC 700928 / UPEC</strain>
    </source>
</reference>
<protein>
    <recommendedName>
        <fullName>pyr operon leader peptide</fullName>
    </recommendedName>
    <alternativeName>
        <fullName>pyrBI operon attenuator</fullName>
    </alternativeName>
</protein>
<proteinExistence type="predicted"/>
<organism>
    <name type="scientific">Escherichia coli O6:H1 (strain CFT073 / ATCC 700928 / UPEC)</name>
    <dbReference type="NCBI Taxonomy" id="199310"/>
    <lineage>
        <taxon>Bacteria</taxon>
        <taxon>Pseudomonadati</taxon>
        <taxon>Pseudomonadota</taxon>
        <taxon>Gammaproteobacteria</taxon>
        <taxon>Enterobacterales</taxon>
        <taxon>Enterobacteriaceae</taxon>
        <taxon>Escherichia</taxon>
    </lineage>
</organism>
<dbReference type="EMBL" id="AE014075">
    <property type="protein sequence ID" value="AAN83767.1"/>
    <property type="molecule type" value="Genomic_DNA"/>
</dbReference>
<dbReference type="RefSeq" id="WP_001296693.1">
    <property type="nucleotide sequence ID" value="NZ_CP051263.1"/>
</dbReference>
<dbReference type="STRING" id="199310.c5502"/>
<dbReference type="GeneID" id="93777578"/>
<dbReference type="KEGG" id="ecc:c5502"/>
<dbReference type="eggNOG" id="ENOG5033C5D">
    <property type="taxonomic scope" value="Bacteria"/>
</dbReference>
<dbReference type="HOGENOM" id="CLU_213745_0_0_6"/>
<dbReference type="BioCyc" id="ECOL199310:C5502-MONOMER"/>
<dbReference type="Proteomes" id="UP000001410">
    <property type="component" value="Chromosome"/>
</dbReference>
<dbReference type="GO" id="GO:0019856">
    <property type="term" value="P:pyrimidine nucleobase biosynthetic process"/>
    <property type="evidence" value="ECO:0007669"/>
    <property type="project" value="InterPro"/>
</dbReference>
<dbReference type="GO" id="GO:0006221">
    <property type="term" value="P:pyrimidine nucleotide biosynthetic process"/>
    <property type="evidence" value="ECO:0007669"/>
    <property type="project" value="UniProtKB-KW"/>
</dbReference>
<dbReference type="InterPro" id="IPR012602">
    <property type="entry name" value="PyrBI_leader"/>
</dbReference>
<dbReference type="NCBIfam" id="NF007587">
    <property type="entry name" value="PRK10224.1"/>
    <property type="match status" value="1"/>
</dbReference>
<dbReference type="Pfam" id="PF08052">
    <property type="entry name" value="PyrBI_leader"/>
    <property type="match status" value="1"/>
</dbReference>
<dbReference type="PIRSF" id="PIRSF003249">
    <property type="entry name" value="PyrBI_leader"/>
    <property type="match status" value="1"/>
</dbReference>
<name>LPPY_ECOL6</name>
<keyword id="KW-0428">Leader peptide</keyword>
<keyword id="KW-0665">Pyrimidine biosynthesis</keyword>
<keyword id="KW-1185">Reference proteome</keyword>
<gene>
    <name type="primary">pyrL</name>
    <name type="ordered locus">c5502</name>
</gene>